<comment type="function">
    <text evidence="1">Plays a role in virus cell tropism, and may be required for efficient virus replication in macrophages. Interferes with host NF-kappa-B promoter activity mediated by TLR8. Mechanistically, inhibits the phosphorylation and subsequent nuclear translocation of host NF-kappa-B RELA subunit downstream of TLR8. Promotes the expression of the autophagy-related protein host ULK1 to degrade host STING and inhibit the interferon response. Also inhibits JAK1- and JAK2-mediated signaling and thus negatively regulates the IFN-gamma signaling.</text>
</comment>
<comment type="subunit">
    <text evidence="1">Interacts with host STING1. Interacts with host JAK1; this interaction leads to JAK1 degradation. Interacts with host JAK2; this interaction leads to JAK2 degradation. Interacts with host RELA; this interaction inhibits NF-kappa-B promoter activity.</text>
</comment>
<comment type="subcellular location">
    <subcellularLocation>
        <location evidence="1">Host cytoplasm</location>
    </subcellularLocation>
</comment>
<comment type="induction">
    <text evidence="2">Expressed in the early phase of the viral replicative cycle.</text>
</comment>
<comment type="similarity">
    <text evidence="2">Belongs to the asfivirus MGF 505 family.</text>
</comment>
<sequence length="528" mass="61571">MFSLQDLCRKNTFFLPNDFKKHTLQLLGLYWKEHGSVHRAEKDNIMIQNELILTVNDALQLAGEEGDTDVVQLLLLWEGNLHYAIIGALKAENYNLICEYHSQIEDWHALLPLIQDPETFEKCHELSLGCDLLCLLQHAIKCNMLSILVKYKEDLLNARIRHRIQSLFVLACETRRIEIILWIGQNLPIPEPETIFSIAVITKDLELFSLGYKIIFDYMQRQGIFQLSEVVRKILLNRHIDMAVNKGLLPFVLETFKYGGSVKRALSCAVMDNKRKVIDYLVRHENISHQTIERLLYLAVKKHSSRKTLNLLLSYINYKVKNIKKLLDHVLGGNSTLVLKILLEKKQNLVDAALTRLVKHSTYFRVKEFIEDFSISPEKFIKIAVREQKNVIIKVICEDIWENPAERIRYLKQIVSSIKYESGRQFLINIIHTIYQSHSLKPEEIFKLATFYVKHNAVTHFKDLCKFLWLNRGTESKKHFLKCLEIADEKDFPAIKSIVSEYINYMFTAGTMTKDEIMQAYASEYTMC</sequence>
<proteinExistence type="inferred from homology"/>
<evidence type="ECO:0000250" key="1">
    <source>
        <dbReference type="UniProtKB" id="Q89925"/>
    </source>
</evidence>
<evidence type="ECO:0000305" key="2"/>
<organism>
    <name type="scientific">African swine fever virus (isolate Pig/Kenya/KEN-50/1950)</name>
    <name type="common">ASFV</name>
    <dbReference type="NCBI Taxonomy" id="561445"/>
    <lineage>
        <taxon>Viruses</taxon>
        <taxon>Varidnaviria</taxon>
        <taxon>Bamfordvirae</taxon>
        <taxon>Nucleocytoviricota</taxon>
        <taxon>Pokkesviricetes</taxon>
        <taxon>Asfuvirales</taxon>
        <taxon>Asfarviridae</taxon>
        <taxon>Asfivirus</taxon>
        <taxon>African swine fever virus</taxon>
    </lineage>
</organism>
<protein>
    <recommendedName>
        <fullName>Protein MGF 505-7R</fullName>
    </recommendedName>
</protein>
<keyword id="KW-0244">Early protein</keyword>
<keyword id="KW-1035">Host cytoplasm</keyword>
<name>5057R_ASFK5</name>
<gene>
    <name type="ordered locus">Ken-043</name>
</gene>
<accession>P0C9U2</accession>
<dbReference type="EMBL" id="AY261360">
    <property type="status" value="NOT_ANNOTATED_CDS"/>
    <property type="molecule type" value="Genomic_DNA"/>
</dbReference>
<dbReference type="SMR" id="P0C9U2"/>
<dbReference type="Proteomes" id="UP000000861">
    <property type="component" value="Segment"/>
</dbReference>
<dbReference type="GO" id="GO:0030430">
    <property type="term" value="C:host cell cytoplasm"/>
    <property type="evidence" value="ECO:0007669"/>
    <property type="project" value="UniProtKB-SubCell"/>
</dbReference>
<dbReference type="InterPro" id="IPR004858">
    <property type="entry name" value="MGF_505"/>
</dbReference>
<dbReference type="Pfam" id="PF03158">
    <property type="entry name" value="DUF249"/>
    <property type="match status" value="1"/>
</dbReference>
<feature type="chain" id="PRO_0000373340" description="Protein MGF 505-7R">
    <location>
        <begin position="1"/>
        <end position="528"/>
    </location>
</feature>
<organismHost>
    <name type="scientific">Ornithodoros</name>
    <name type="common">relapsing fever ticks</name>
    <dbReference type="NCBI Taxonomy" id="6937"/>
</organismHost>
<organismHost>
    <name type="scientific">Phacochoerus aethiopicus</name>
    <name type="common">Warthog</name>
    <dbReference type="NCBI Taxonomy" id="85517"/>
</organismHost>
<organismHost>
    <name type="scientific">Phacochoerus africanus</name>
    <name type="common">Warthog</name>
    <dbReference type="NCBI Taxonomy" id="41426"/>
</organismHost>
<organismHost>
    <name type="scientific">Potamochoerus larvatus</name>
    <name type="common">Bushpig</name>
    <dbReference type="NCBI Taxonomy" id="273792"/>
</organismHost>
<organismHost>
    <name type="scientific">Sus scrofa</name>
    <name type="common">Pig</name>
    <dbReference type="NCBI Taxonomy" id="9823"/>
</organismHost>
<reference key="1">
    <citation type="submission" date="2003-03" db="EMBL/GenBank/DDBJ databases">
        <title>African swine fever virus genomes.</title>
        <authorList>
            <person name="Kutish G.F."/>
            <person name="Rock D.L."/>
        </authorList>
    </citation>
    <scope>NUCLEOTIDE SEQUENCE [LARGE SCALE GENOMIC DNA]</scope>
</reference>